<gene>
    <name evidence="1" type="primary">pyrB</name>
    <name type="ordered locus">Kcr_0154</name>
</gene>
<sequence length="296" mass="33058">MSLRGKDIISISDIKRSDLERIFRVASSRFQGDELKGKIIAMAFFEPSTRTRFSFETATLRLGGNYIGFEAAQSTSLAKGESFSDTIRMLDSYADGIVVRHSLEGAAKLAAELAEAPVINAGDGTKNHPTQAMIDLYTIWKERGNLDNLTYGVLGDLRYGRAAASFLKALNLYSPKKVYLICPEGLRPKQELLDSLKMPWEFSDLKDALPELDVLYVTRVQKERFPDPSEYERVKGSYKVDSSILKDAKEGLMILHPLPRVDEISLDVDSTPYAYYFKQAANGVPVRMALLSEVIP</sequence>
<accession>B1L385</accession>
<proteinExistence type="inferred from homology"/>
<name>PYRB_KORCO</name>
<organism>
    <name type="scientific">Korarchaeum cryptofilum (strain OPF8)</name>
    <dbReference type="NCBI Taxonomy" id="374847"/>
    <lineage>
        <taxon>Archaea</taxon>
        <taxon>Thermoproteota</taxon>
        <taxon>Candidatus Korarchaeia</taxon>
        <taxon>Candidatus Korarchaeales</taxon>
        <taxon>Candidatus Korarchaeaceae</taxon>
        <taxon>Candidatus Korarchaeum</taxon>
    </lineage>
</organism>
<comment type="function">
    <text evidence="1">Catalyzes the condensation of carbamoyl phosphate and aspartate to form carbamoyl aspartate and inorganic phosphate, the committed step in the de novo pyrimidine nucleotide biosynthesis pathway.</text>
</comment>
<comment type="catalytic activity">
    <reaction evidence="1">
        <text>carbamoyl phosphate + L-aspartate = N-carbamoyl-L-aspartate + phosphate + H(+)</text>
        <dbReference type="Rhea" id="RHEA:20013"/>
        <dbReference type="ChEBI" id="CHEBI:15378"/>
        <dbReference type="ChEBI" id="CHEBI:29991"/>
        <dbReference type="ChEBI" id="CHEBI:32814"/>
        <dbReference type="ChEBI" id="CHEBI:43474"/>
        <dbReference type="ChEBI" id="CHEBI:58228"/>
        <dbReference type="EC" id="2.1.3.2"/>
    </reaction>
</comment>
<comment type="pathway">
    <text evidence="1">Pyrimidine metabolism; UMP biosynthesis via de novo pathway; (S)-dihydroorotate from bicarbonate: step 2/3.</text>
</comment>
<comment type="subunit">
    <text evidence="1">Heterooligomer of catalytic and regulatory chains.</text>
</comment>
<comment type="similarity">
    <text evidence="1">Belongs to the aspartate/ornithine carbamoyltransferase superfamily. ATCase family.</text>
</comment>
<keyword id="KW-0665">Pyrimidine biosynthesis</keyword>
<keyword id="KW-1185">Reference proteome</keyword>
<keyword id="KW-0808">Transferase</keyword>
<dbReference type="EC" id="2.1.3.2" evidence="1"/>
<dbReference type="EMBL" id="CP000968">
    <property type="protein sequence ID" value="ACB06914.1"/>
    <property type="molecule type" value="Genomic_DNA"/>
</dbReference>
<dbReference type="RefSeq" id="WP_012308811.1">
    <property type="nucleotide sequence ID" value="NC_010482.1"/>
</dbReference>
<dbReference type="SMR" id="B1L385"/>
<dbReference type="FunCoup" id="B1L385">
    <property type="interactions" value="161"/>
</dbReference>
<dbReference type="STRING" id="374847.Kcr_0154"/>
<dbReference type="EnsemblBacteria" id="ACB06914">
    <property type="protein sequence ID" value="ACB06914"/>
    <property type="gene ID" value="Kcr_0154"/>
</dbReference>
<dbReference type="GeneID" id="6093443"/>
<dbReference type="KEGG" id="kcr:Kcr_0154"/>
<dbReference type="eggNOG" id="arCOG00911">
    <property type="taxonomic scope" value="Archaea"/>
</dbReference>
<dbReference type="HOGENOM" id="CLU_043846_1_2_2"/>
<dbReference type="InParanoid" id="B1L385"/>
<dbReference type="OrthoDB" id="7792at2157"/>
<dbReference type="PhylomeDB" id="B1L385"/>
<dbReference type="UniPathway" id="UPA00070">
    <property type="reaction ID" value="UER00116"/>
</dbReference>
<dbReference type="Proteomes" id="UP000001686">
    <property type="component" value="Chromosome"/>
</dbReference>
<dbReference type="GO" id="GO:0016597">
    <property type="term" value="F:amino acid binding"/>
    <property type="evidence" value="ECO:0007669"/>
    <property type="project" value="InterPro"/>
</dbReference>
<dbReference type="GO" id="GO:0004070">
    <property type="term" value="F:aspartate carbamoyltransferase activity"/>
    <property type="evidence" value="ECO:0007669"/>
    <property type="project" value="UniProtKB-UniRule"/>
</dbReference>
<dbReference type="GO" id="GO:0006207">
    <property type="term" value="P:'de novo' pyrimidine nucleobase biosynthetic process"/>
    <property type="evidence" value="ECO:0007669"/>
    <property type="project" value="InterPro"/>
</dbReference>
<dbReference type="GO" id="GO:0044205">
    <property type="term" value="P:'de novo' UMP biosynthetic process"/>
    <property type="evidence" value="ECO:0007669"/>
    <property type="project" value="UniProtKB-UniRule"/>
</dbReference>
<dbReference type="GO" id="GO:0006520">
    <property type="term" value="P:amino acid metabolic process"/>
    <property type="evidence" value="ECO:0007669"/>
    <property type="project" value="InterPro"/>
</dbReference>
<dbReference type="FunFam" id="3.40.50.1370:FF:000002">
    <property type="entry name" value="Aspartate carbamoyltransferase 2"/>
    <property type="match status" value="1"/>
</dbReference>
<dbReference type="Gene3D" id="3.40.50.1370">
    <property type="entry name" value="Aspartate/ornithine carbamoyltransferase"/>
    <property type="match status" value="2"/>
</dbReference>
<dbReference type="HAMAP" id="MF_00001">
    <property type="entry name" value="Asp_carb_tr"/>
    <property type="match status" value="1"/>
</dbReference>
<dbReference type="InterPro" id="IPR006132">
    <property type="entry name" value="Asp/Orn_carbamoyltranf_P-bd"/>
</dbReference>
<dbReference type="InterPro" id="IPR006130">
    <property type="entry name" value="Asp/Orn_carbamoylTrfase"/>
</dbReference>
<dbReference type="InterPro" id="IPR036901">
    <property type="entry name" value="Asp/Orn_carbamoylTrfase_sf"/>
</dbReference>
<dbReference type="InterPro" id="IPR002082">
    <property type="entry name" value="Asp_carbamoyltransf"/>
</dbReference>
<dbReference type="InterPro" id="IPR006131">
    <property type="entry name" value="Asp_carbamoyltransf_Asp/Orn-bd"/>
</dbReference>
<dbReference type="NCBIfam" id="TIGR00670">
    <property type="entry name" value="asp_carb_tr"/>
    <property type="match status" value="1"/>
</dbReference>
<dbReference type="NCBIfam" id="NF002032">
    <property type="entry name" value="PRK00856.1"/>
    <property type="match status" value="1"/>
</dbReference>
<dbReference type="PANTHER" id="PTHR45753:SF6">
    <property type="entry name" value="ASPARTATE CARBAMOYLTRANSFERASE"/>
    <property type="match status" value="1"/>
</dbReference>
<dbReference type="PANTHER" id="PTHR45753">
    <property type="entry name" value="ORNITHINE CARBAMOYLTRANSFERASE, MITOCHONDRIAL"/>
    <property type="match status" value="1"/>
</dbReference>
<dbReference type="Pfam" id="PF00185">
    <property type="entry name" value="OTCace"/>
    <property type="match status" value="1"/>
</dbReference>
<dbReference type="Pfam" id="PF02729">
    <property type="entry name" value="OTCace_N"/>
    <property type="match status" value="1"/>
</dbReference>
<dbReference type="PRINTS" id="PR00100">
    <property type="entry name" value="AOTCASE"/>
</dbReference>
<dbReference type="PRINTS" id="PR00101">
    <property type="entry name" value="ATCASE"/>
</dbReference>
<dbReference type="SUPFAM" id="SSF53671">
    <property type="entry name" value="Aspartate/ornithine carbamoyltransferase"/>
    <property type="match status" value="1"/>
</dbReference>
<dbReference type="PROSITE" id="PS00097">
    <property type="entry name" value="CARBAMOYLTRANSFERASE"/>
    <property type="match status" value="1"/>
</dbReference>
<reference key="1">
    <citation type="journal article" date="2008" name="Proc. Natl. Acad. Sci. U.S.A.">
        <title>A korarchaeal genome reveals new insights into the evolution of the Archaea.</title>
        <authorList>
            <person name="Elkins J.G."/>
            <person name="Podar M."/>
            <person name="Graham D.E."/>
            <person name="Makarova K.S."/>
            <person name="Wolf Y."/>
            <person name="Randau L."/>
            <person name="Hedlund B.P."/>
            <person name="Brochier-Armanet C."/>
            <person name="Kunin V."/>
            <person name="Anderson I."/>
            <person name="Lapidus A."/>
            <person name="Goltsman E."/>
            <person name="Barry K."/>
            <person name="Koonin E.V."/>
            <person name="Hugenholtz P."/>
            <person name="Kyrpides N."/>
            <person name="Wanner G."/>
            <person name="Richardson P."/>
            <person name="Keller M."/>
            <person name="Stetter K.O."/>
        </authorList>
    </citation>
    <scope>NUCLEOTIDE SEQUENCE [LARGE SCALE GENOMIC DNA]</scope>
    <source>
        <strain>OPF8</strain>
    </source>
</reference>
<evidence type="ECO:0000255" key="1">
    <source>
        <dbReference type="HAMAP-Rule" id="MF_00001"/>
    </source>
</evidence>
<feature type="chain" id="PRO_1000088772" description="Aspartate carbamoyltransferase catalytic subunit">
    <location>
        <begin position="1"/>
        <end position="296"/>
    </location>
</feature>
<feature type="binding site" evidence="1">
    <location>
        <position position="50"/>
    </location>
    <ligand>
        <name>carbamoyl phosphate</name>
        <dbReference type="ChEBI" id="CHEBI:58228"/>
    </ligand>
</feature>
<feature type="binding site" evidence="1">
    <location>
        <position position="51"/>
    </location>
    <ligand>
        <name>carbamoyl phosphate</name>
        <dbReference type="ChEBI" id="CHEBI:58228"/>
    </ligand>
</feature>
<feature type="binding site" evidence="1">
    <location>
        <position position="79"/>
    </location>
    <ligand>
        <name>L-aspartate</name>
        <dbReference type="ChEBI" id="CHEBI:29991"/>
    </ligand>
</feature>
<feature type="binding site" evidence="1">
    <location>
        <position position="100"/>
    </location>
    <ligand>
        <name>carbamoyl phosphate</name>
        <dbReference type="ChEBI" id="CHEBI:58228"/>
    </ligand>
</feature>
<feature type="binding site" evidence="1">
    <location>
        <position position="128"/>
    </location>
    <ligand>
        <name>carbamoyl phosphate</name>
        <dbReference type="ChEBI" id="CHEBI:58228"/>
    </ligand>
</feature>
<feature type="binding site" evidence="1">
    <location>
        <position position="131"/>
    </location>
    <ligand>
        <name>carbamoyl phosphate</name>
        <dbReference type="ChEBI" id="CHEBI:58228"/>
    </ligand>
</feature>
<feature type="binding site" evidence="1">
    <location>
        <position position="161"/>
    </location>
    <ligand>
        <name>L-aspartate</name>
        <dbReference type="ChEBI" id="CHEBI:29991"/>
    </ligand>
</feature>
<feature type="binding site" evidence="1">
    <location>
        <position position="219"/>
    </location>
    <ligand>
        <name>L-aspartate</name>
        <dbReference type="ChEBI" id="CHEBI:29991"/>
    </ligand>
</feature>
<feature type="binding site" evidence="1">
    <location>
        <position position="258"/>
    </location>
    <ligand>
        <name>carbamoyl phosphate</name>
        <dbReference type="ChEBI" id="CHEBI:58228"/>
    </ligand>
</feature>
<feature type="binding site" evidence="1">
    <location>
        <position position="259"/>
    </location>
    <ligand>
        <name>carbamoyl phosphate</name>
        <dbReference type="ChEBI" id="CHEBI:58228"/>
    </ligand>
</feature>
<protein>
    <recommendedName>
        <fullName evidence="1">Aspartate carbamoyltransferase catalytic subunit</fullName>
        <ecNumber evidence="1">2.1.3.2</ecNumber>
    </recommendedName>
    <alternativeName>
        <fullName evidence="1">Aspartate transcarbamylase</fullName>
        <shortName evidence="1">ATCase</shortName>
    </alternativeName>
</protein>